<evidence type="ECO:0000255" key="1">
    <source>
        <dbReference type="HAMAP-Rule" id="MF_01619"/>
    </source>
</evidence>
<sequence length="562" mass="62467">MNNHIRPLYIPYAGPALLSTPLLNKGSAFSTTERKYFNLEGLLPEAIESIEEQTGRAYKQYQSFENDMDKHIYLRNIQDTNETLFYRLVQNHISEMMPIIYTPTVGAACENFSNIYRRGRGLFISYENKNRIDDLLNNAANQNVKVIVVTDGERILGLGDQGIGGMGIPIGKLALYTACGGISPAHTLPIVLDVGTNNPQRLADPMYMGWRHPRVTGNEYKDFVEEFIQAVQRRWPQALVQFEDFAQKNAMPLLERYKNRICCFNDDIQGTAAVTVGSLLAACKAAGSSLAQQRVTFLGAGSAGCGIAEAIIAQMVSEGISDAQARSQVYMVDRWGLLQEGMPNLLDFQQRLVQKAENTKEWVSEEPNYSLFDVMHNAKPTVLIGVSGAPGLFSKEVIQEMHKHCERPIVFPLSNPTSRVEATPNDIIRWTDGQALVATGSPFDPVTHNGQTYPIAQCNNSFIFPGIGLGVLAIKATRVSDEMLRESSRALSECSPLAINGSGALLPPLEEIHTVSKKIAFAVAKKAIEQGYALEITDEALMQKIEQYFWKPVYRRYKRTAF</sequence>
<feature type="chain" id="PRO_1000185987" description="NAD-dependent malic enzyme">
    <location>
        <begin position="1"/>
        <end position="562"/>
    </location>
</feature>
<feature type="active site" description="Proton donor" evidence="1">
    <location>
        <position position="101"/>
    </location>
</feature>
<feature type="active site" description="Proton acceptor" evidence="1">
    <location>
        <position position="172"/>
    </location>
</feature>
<feature type="binding site" evidence="1">
    <location>
        <position position="154"/>
    </location>
    <ligand>
        <name>NAD(+)</name>
        <dbReference type="ChEBI" id="CHEBI:57540"/>
    </ligand>
</feature>
<feature type="binding site" evidence="1">
    <location>
        <position position="243"/>
    </location>
    <ligand>
        <name>a divalent metal cation</name>
        <dbReference type="ChEBI" id="CHEBI:60240"/>
    </ligand>
</feature>
<feature type="binding site" evidence="1">
    <location>
        <position position="244"/>
    </location>
    <ligand>
        <name>a divalent metal cation</name>
        <dbReference type="ChEBI" id="CHEBI:60240"/>
    </ligand>
</feature>
<feature type="binding site" evidence="1">
    <location>
        <position position="267"/>
    </location>
    <ligand>
        <name>a divalent metal cation</name>
        <dbReference type="ChEBI" id="CHEBI:60240"/>
    </ligand>
</feature>
<feature type="binding site" evidence="1">
    <location>
        <position position="267"/>
    </location>
    <ligand>
        <name>NAD(+)</name>
        <dbReference type="ChEBI" id="CHEBI:57540"/>
    </ligand>
</feature>
<feature type="binding site" evidence="1">
    <location>
        <position position="415"/>
    </location>
    <ligand>
        <name>NAD(+)</name>
        <dbReference type="ChEBI" id="CHEBI:57540"/>
    </ligand>
</feature>
<feature type="site" description="Important for activity" evidence="1">
    <location>
        <position position="267"/>
    </location>
</feature>
<protein>
    <recommendedName>
        <fullName evidence="1">NAD-dependent malic enzyme</fullName>
        <shortName evidence="1">NAD-ME</shortName>
        <ecNumber evidence="1">1.1.1.38</ecNumber>
    </recommendedName>
</protein>
<reference key="1">
    <citation type="journal article" date="2008" name="BMC Genomics">
        <title>The genome sequence of the fish pathogen Aliivibrio salmonicida strain LFI1238 shows extensive evidence of gene decay.</title>
        <authorList>
            <person name="Hjerde E."/>
            <person name="Lorentzen M.S."/>
            <person name="Holden M.T."/>
            <person name="Seeger K."/>
            <person name="Paulsen S."/>
            <person name="Bason N."/>
            <person name="Churcher C."/>
            <person name="Harris D."/>
            <person name="Norbertczak H."/>
            <person name="Quail M.A."/>
            <person name="Sanders S."/>
            <person name="Thurston S."/>
            <person name="Parkhill J."/>
            <person name="Willassen N.P."/>
            <person name="Thomson N.R."/>
        </authorList>
    </citation>
    <scope>NUCLEOTIDE SEQUENCE [LARGE SCALE GENOMIC DNA]</scope>
    <source>
        <strain>LFI1238</strain>
    </source>
</reference>
<organism>
    <name type="scientific">Aliivibrio salmonicida (strain LFI1238)</name>
    <name type="common">Vibrio salmonicida (strain LFI1238)</name>
    <dbReference type="NCBI Taxonomy" id="316275"/>
    <lineage>
        <taxon>Bacteria</taxon>
        <taxon>Pseudomonadati</taxon>
        <taxon>Pseudomonadota</taxon>
        <taxon>Gammaproteobacteria</taxon>
        <taxon>Vibrionales</taxon>
        <taxon>Vibrionaceae</taxon>
        <taxon>Aliivibrio</taxon>
    </lineage>
</organism>
<keyword id="KW-0479">Metal-binding</keyword>
<keyword id="KW-0520">NAD</keyword>
<keyword id="KW-0560">Oxidoreductase</keyword>
<dbReference type="EC" id="1.1.1.38" evidence="1"/>
<dbReference type="EMBL" id="FM178379">
    <property type="protein sequence ID" value="CAQ78959.1"/>
    <property type="molecule type" value="Genomic_DNA"/>
</dbReference>
<dbReference type="RefSeq" id="WP_012549994.1">
    <property type="nucleotide sequence ID" value="NC_011312.1"/>
</dbReference>
<dbReference type="SMR" id="B6EK11"/>
<dbReference type="KEGG" id="vsa:VSAL_I1274"/>
<dbReference type="eggNOG" id="COG0281">
    <property type="taxonomic scope" value="Bacteria"/>
</dbReference>
<dbReference type="HOGENOM" id="CLU_011405_5_2_6"/>
<dbReference type="Proteomes" id="UP000001730">
    <property type="component" value="Chromosome 1"/>
</dbReference>
<dbReference type="GO" id="GO:0005829">
    <property type="term" value="C:cytosol"/>
    <property type="evidence" value="ECO:0007669"/>
    <property type="project" value="TreeGrafter"/>
</dbReference>
<dbReference type="GO" id="GO:0004471">
    <property type="term" value="F:malate dehydrogenase (decarboxylating) (NAD+) activity"/>
    <property type="evidence" value="ECO:0007669"/>
    <property type="project" value="UniProtKB-UniRule"/>
</dbReference>
<dbReference type="GO" id="GO:0046872">
    <property type="term" value="F:metal ion binding"/>
    <property type="evidence" value="ECO:0007669"/>
    <property type="project" value="UniProtKB-KW"/>
</dbReference>
<dbReference type="GO" id="GO:0051287">
    <property type="term" value="F:NAD binding"/>
    <property type="evidence" value="ECO:0007669"/>
    <property type="project" value="InterPro"/>
</dbReference>
<dbReference type="GO" id="GO:0008948">
    <property type="term" value="F:oxaloacetate decarboxylase activity"/>
    <property type="evidence" value="ECO:0007669"/>
    <property type="project" value="UniProtKB-UniRule"/>
</dbReference>
<dbReference type="GO" id="GO:0006108">
    <property type="term" value="P:malate metabolic process"/>
    <property type="evidence" value="ECO:0007669"/>
    <property type="project" value="TreeGrafter"/>
</dbReference>
<dbReference type="CDD" id="cd05312">
    <property type="entry name" value="NAD_bind_1_malic_enz"/>
    <property type="match status" value="1"/>
</dbReference>
<dbReference type="FunFam" id="3.40.50.10380:FF:000001">
    <property type="entry name" value="NAD-dependent malic enzyme"/>
    <property type="match status" value="1"/>
</dbReference>
<dbReference type="FunFam" id="3.40.50.720:FF:000055">
    <property type="entry name" value="NAD-dependent malic enzyme"/>
    <property type="match status" value="1"/>
</dbReference>
<dbReference type="Gene3D" id="3.40.50.10380">
    <property type="entry name" value="Malic enzyme, N-terminal domain"/>
    <property type="match status" value="1"/>
</dbReference>
<dbReference type="Gene3D" id="3.40.50.720">
    <property type="entry name" value="NAD(P)-binding Rossmann-like Domain"/>
    <property type="match status" value="1"/>
</dbReference>
<dbReference type="HAMAP" id="MF_01619">
    <property type="entry name" value="NAD_malic_enz"/>
    <property type="match status" value="1"/>
</dbReference>
<dbReference type="InterPro" id="IPR046346">
    <property type="entry name" value="Aminoacid_DH-like_N_sf"/>
</dbReference>
<dbReference type="InterPro" id="IPR015884">
    <property type="entry name" value="Malic_enzyme_CS"/>
</dbReference>
<dbReference type="InterPro" id="IPR012301">
    <property type="entry name" value="Malic_N_dom"/>
</dbReference>
<dbReference type="InterPro" id="IPR037062">
    <property type="entry name" value="Malic_N_dom_sf"/>
</dbReference>
<dbReference type="InterPro" id="IPR012302">
    <property type="entry name" value="Malic_NAD-bd"/>
</dbReference>
<dbReference type="InterPro" id="IPR001891">
    <property type="entry name" value="Malic_OxRdtase"/>
</dbReference>
<dbReference type="InterPro" id="IPR036291">
    <property type="entry name" value="NAD(P)-bd_dom_sf"/>
</dbReference>
<dbReference type="InterPro" id="IPR023667">
    <property type="entry name" value="NAD_malic_enz_proteobac"/>
</dbReference>
<dbReference type="NCBIfam" id="NF010052">
    <property type="entry name" value="PRK13529.1"/>
    <property type="match status" value="1"/>
</dbReference>
<dbReference type="PANTHER" id="PTHR23406">
    <property type="entry name" value="MALIC ENZYME-RELATED"/>
    <property type="match status" value="1"/>
</dbReference>
<dbReference type="PANTHER" id="PTHR23406:SF34">
    <property type="entry name" value="NAD-DEPENDENT MALIC ENZYME, MITOCHONDRIAL"/>
    <property type="match status" value="1"/>
</dbReference>
<dbReference type="Pfam" id="PF00390">
    <property type="entry name" value="malic"/>
    <property type="match status" value="1"/>
</dbReference>
<dbReference type="Pfam" id="PF03949">
    <property type="entry name" value="Malic_M"/>
    <property type="match status" value="1"/>
</dbReference>
<dbReference type="PIRSF" id="PIRSF000106">
    <property type="entry name" value="ME"/>
    <property type="match status" value="1"/>
</dbReference>
<dbReference type="PRINTS" id="PR00072">
    <property type="entry name" value="MALOXRDTASE"/>
</dbReference>
<dbReference type="SMART" id="SM01274">
    <property type="entry name" value="malic"/>
    <property type="match status" value="1"/>
</dbReference>
<dbReference type="SMART" id="SM00919">
    <property type="entry name" value="Malic_M"/>
    <property type="match status" value="1"/>
</dbReference>
<dbReference type="SUPFAM" id="SSF53223">
    <property type="entry name" value="Aminoacid dehydrogenase-like, N-terminal domain"/>
    <property type="match status" value="1"/>
</dbReference>
<dbReference type="SUPFAM" id="SSF51735">
    <property type="entry name" value="NAD(P)-binding Rossmann-fold domains"/>
    <property type="match status" value="1"/>
</dbReference>
<dbReference type="PROSITE" id="PS00331">
    <property type="entry name" value="MALIC_ENZYMES"/>
    <property type="match status" value="1"/>
</dbReference>
<accession>B6EK11</accession>
<proteinExistence type="inferred from homology"/>
<gene>
    <name evidence="1" type="primary">maeA</name>
    <name type="ordered locus">VSAL_I1274</name>
</gene>
<comment type="catalytic activity">
    <reaction evidence="1">
        <text>(S)-malate + NAD(+) = pyruvate + CO2 + NADH</text>
        <dbReference type="Rhea" id="RHEA:12653"/>
        <dbReference type="ChEBI" id="CHEBI:15361"/>
        <dbReference type="ChEBI" id="CHEBI:15589"/>
        <dbReference type="ChEBI" id="CHEBI:16526"/>
        <dbReference type="ChEBI" id="CHEBI:57540"/>
        <dbReference type="ChEBI" id="CHEBI:57945"/>
        <dbReference type="EC" id="1.1.1.38"/>
    </reaction>
</comment>
<comment type="catalytic activity">
    <reaction evidence="1">
        <text>oxaloacetate + H(+) = pyruvate + CO2</text>
        <dbReference type="Rhea" id="RHEA:15641"/>
        <dbReference type="ChEBI" id="CHEBI:15361"/>
        <dbReference type="ChEBI" id="CHEBI:15378"/>
        <dbReference type="ChEBI" id="CHEBI:16452"/>
        <dbReference type="ChEBI" id="CHEBI:16526"/>
        <dbReference type="EC" id="1.1.1.38"/>
    </reaction>
</comment>
<comment type="cofactor">
    <cofactor evidence="1">
        <name>Mg(2+)</name>
        <dbReference type="ChEBI" id="CHEBI:18420"/>
    </cofactor>
    <cofactor evidence="1">
        <name>Mn(2+)</name>
        <dbReference type="ChEBI" id="CHEBI:29035"/>
    </cofactor>
    <text evidence="1">Divalent metal cations. Prefers magnesium or manganese.</text>
</comment>
<comment type="subunit">
    <text evidence="1">Homotetramer.</text>
</comment>
<comment type="similarity">
    <text evidence="1">Belongs to the malic enzymes family.</text>
</comment>
<name>MAO1_ALISL</name>